<reference key="1">
    <citation type="submission" date="2005-08" db="EMBL/GenBank/DDBJ databases">
        <authorList>
            <consortium name="NIH - Mammalian Gene Collection (MGC) project"/>
        </authorList>
    </citation>
    <scope>NUCLEOTIDE SEQUENCE [LARGE SCALE MRNA]</scope>
    <source>
        <strain>Crossbred X Angus</strain>
        <tissue>Ileum</tissue>
    </source>
</reference>
<dbReference type="EMBL" id="BC102155">
    <property type="protein sequence ID" value="AAI02156.1"/>
    <property type="molecule type" value="mRNA"/>
</dbReference>
<dbReference type="RefSeq" id="NP_001073051.1">
    <property type="nucleotide sequence ID" value="NM_001079583.2"/>
</dbReference>
<dbReference type="SMR" id="Q3T123"/>
<dbReference type="FunCoup" id="Q3T123">
    <property type="interactions" value="3993"/>
</dbReference>
<dbReference type="STRING" id="9913.ENSBTAP00000018133"/>
<dbReference type="PaxDb" id="9913-ENSBTAP00000046261"/>
<dbReference type="GeneID" id="509729"/>
<dbReference type="KEGG" id="bta:509729"/>
<dbReference type="CTD" id="9443"/>
<dbReference type="eggNOG" id="KOG0570">
    <property type="taxonomic scope" value="Eukaryota"/>
</dbReference>
<dbReference type="InParanoid" id="Q3T123"/>
<dbReference type="OrthoDB" id="10253553at2759"/>
<dbReference type="Proteomes" id="UP000009136">
    <property type="component" value="Unplaced"/>
</dbReference>
<dbReference type="GO" id="GO:0016592">
    <property type="term" value="C:mediator complex"/>
    <property type="evidence" value="ECO:0000318"/>
    <property type="project" value="GO_Central"/>
</dbReference>
<dbReference type="GO" id="GO:0003712">
    <property type="term" value="F:transcription coregulator activity"/>
    <property type="evidence" value="ECO:0007669"/>
    <property type="project" value="InterPro"/>
</dbReference>
<dbReference type="GO" id="GO:0006357">
    <property type="term" value="P:regulation of transcription by RNA polymerase II"/>
    <property type="evidence" value="ECO:0000318"/>
    <property type="project" value="GO_Central"/>
</dbReference>
<dbReference type="Gene3D" id="6.10.140.200">
    <property type="match status" value="1"/>
</dbReference>
<dbReference type="InterPro" id="IPR051669">
    <property type="entry name" value="Immune_Mod/Transcr_Coactivator"/>
</dbReference>
<dbReference type="InterPro" id="IPR037212">
    <property type="entry name" value="Med7/Med21-like"/>
</dbReference>
<dbReference type="InterPro" id="IPR009244">
    <property type="entry name" value="Mediatior_Med7"/>
</dbReference>
<dbReference type="InterPro" id="IPR044888">
    <property type="entry name" value="Mediatior_Med7_sf"/>
</dbReference>
<dbReference type="PANTHER" id="PTHR15498:SF72">
    <property type="entry name" value="MEDIATOR OF RNA POLYMERASE II TRANSCRIPTION SUBUNIT 7"/>
    <property type="match status" value="1"/>
</dbReference>
<dbReference type="PANTHER" id="PTHR15498">
    <property type="entry name" value="T-CELL IMMUNOGLOBULIN AND MUCIN DOMAIN CONTAINING TIM"/>
    <property type="match status" value="1"/>
</dbReference>
<dbReference type="Pfam" id="PF05983">
    <property type="entry name" value="Med7"/>
    <property type="match status" value="1"/>
</dbReference>
<dbReference type="SUPFAM" id="SSF140718">
    <property type="entry name" value="Mediator hinge subcomplex-like"/>
    <property type="match status" value="1"/>
</dbReference>
<evidence type="ECO:0000250" key="1"/>
<evidence type="ECO:0000250" key="2">
    <source>
        <dbReference type="UniProtKB" id="O43513"/>
    </source>
</evidence>
<evidence type="ECO:0000256" key="3">
    <source>
        <dbReference type="SAM" id="MobiDB-lite"/>
    </source>
</evidence>
<evidence type="ECO:0000305" key="4"/>
<name>MED7_BOVIN</name>
<sequence length="233" mass="27278">MGEPQQVSALPPPPMQYIKEYTDENIQEGLAPKPPPPIKDSYMMFGNQFQCDDLIIRPLESQGIERLHPMQFDHKKELRKLNMSILINFLDLLDILIRSPGSIKREEKLEDLKLLFVHVHHLINEYRPHQARETLRVMMEVQKRQRLETAERFQKHLERVIEMIQNCLASLPDDLPHSEAGMRVKTEPMDTDDSNNCIGQNEQQRENSGHRRDQIIEKDAALCVLIDEMNERP</sequence>
<feature type="chain" id="PRO_0000303179" description="Mediator of RNA polymerase II transcription subunit 7">
    <location>
        <begin position="1"/>
        <end position="233"/>
    </location>
</feature>
<feature type="region of interest" description="Disordered" evidence="3">
    <location>
        <begin position="185"/>
        <end position="213"/>
    </location>
</feature>
<feature type="compositionally biased region" description="Basic and acidic residues" evidence="3">
    <location>
        <begin position="203"/>
        <end position="213"/>
    </location>
</feature>
<feature type="modified residue" description="Phosphoserine" evidence="2">
    <location>
        <position position="194"/>
    </location>
</feature>
<feature type="cross-link" description="Glycyl lysine isopeptide (Lys-Gly) (interchain with G-Cter in SUMO1); alternate" evidence="2">
    <location>
        <position position="185"/>
    </location>
</feature>
<feature type="cross-link" description="Glycyl lysine isopeptide (Lys-Gly) (interchain with G-Cter in SUMO2); alternate" evidence="2">
    <location>
        <position position="185"/>
    </location>
</feature>
<accession>Q3T123</accession>
<organism>
    <name type="scientific">Bos taurus</name>
    <name type="common">Bovine</name>
    <dbReference type="NCBI Taxonomy" id="9913"/>
    <lineage>
        <taxon>Eukaryota</taxon>
        <taxon>Metazoa</taxon>
        <taxon>Chordata</taxon>
        <taxon>Craniata</taxon>
        <taxon>Vertebrata</taxon>
        <taxon>Euteleostomi</taxon>
        <taxon>Mammalia</taxon>
        <taxon>Eutheria</taxon>
        <taxon>Laurasiatheria</taxon>
        <taxon>Artiodactyla</taxon>
        <taxon>Ruminantia</taxon>
        <taxon>Pecora</taxon>
        <taxon>Bovidae</taxon>
        <taxon>Bovinae</taxon>
        <taxon>Bos</taxon>
    </lineage>
</organism>
<gene>
    <name type="primary">MED7</name>
    <name type="synonym">CRSP9</name>
</gene>
<keyword id="KW-0010">Activator</keyword>
<keyword id="KW-1017">Isopeptide bond</keyword>
<keyword id="KW-0539">Nucleus</keyword>
<keyword id="KW-0597">Phosphoprotein</keyword>
<keyword id="KW-1185">Reference proteome</keyword>
<keyword id="KW-0804">Transcription</keyword>
<keyword id="KW-0805">Transcription regulation</keyword>
<keyword id="KW-0832">Ubl conjugation</keyword>
<proteinExistence type="evidence at transcript level"/>
<comment type="function">
    <text evidence="1">Component of the Mediator complex, a coactivator involved in the regulated transcription of nearly all RNA polymerase II-dependent genes. Mediator functions as a bridge to convey information from gene-specific regulatory proteins to the basal RNA polymerase II transcription machinery. Mediator is recruited to promoters by direct interactions with regulatory proteins and serves as a scaffold for the assembly of a functional preinitiation complex with RNA polymerase II and the general transcription factors (By similarity).</text>
</comment>
<comment type="subunit">
    <text evidence="1">Component of the Mediator complex, which is composed of MED1, MED4, MED6, MED7, MED8, MED9, MED10, MED11, MED12, MED13, MED13L, MED14, MED15, MED16, MED17, MED18, MED19, MED20, MED21, MED22, MED23, MED24, MED25, MED26, MED27, MED29, MED30, MED31, CCNC, CDK8 and CDC2L6/CDK11. The MED12, MED13, CCNC and CDK8 subunits form a distinct module termed the CDK8 module. Mediator containing the CDK8 module is less active than Mediator lacking this module in supporting transcriptional activation. Individual preparations of the Mediator complex lacking one or more distinct subunits have been variously termed ARC, CRSP, DRIP, PC2, SMCC and TRAP (By similarity).</text>
</comment>
<comment type="subcellular location">
    <subcellularLocation>
        <location evidence="1">Nucleus</location>
    </subcellularLocation>
</comment>
<comment type="similarity">
    <text evidence="4">Belongs to the Mediator complex subunit 7 family.</text>
</comment>
<protein>
    <recommendedName>
        <fullName>Mediator of RNA polymerase II transcription subunit 7</fullName>
    </recommendedName>
    <alternativeName>
        <fullName>Cofactor required for Sp1 transcriptional activation subunit 9</fullName>
        <shortName>CRSP complex subunit 9</shortName>
    </alternativeName>
    <alternativeName>
        <fullName>Mediator complex subunit 7</fullName>
    </alternativeName>
</protein>